<name>TYSY_CYTH3</name>
<organism>
    <name type="scientific">Cytophaga hutchinsonii (strain ATCC 33406 / DSM 1761 / CIP 103989 / NBRC 15051 / NCIMB 9469 / D465)</name>
    <dbReference type="NCBI Taxonomy" id="269798"/>
    <lineage>
        <taxon>Bacteria</taxon>
        <taxon>Pseudomonadati</taxon>
        <taxon>Bacteroidota</taxon>
        <taxon>Cytophagia</taxon>
        <taxon>Cytophagales</taxon>
        <taxon>Cytophagaceae</taxon>
        <taxon>Cytophaga</taxon>
    </lineage>
</organism>
<feature type="chain" id="PRO_1000000589" description="Thymidylate synthase">
    <location>
        <begin position="1"/>
        <end position="264"/>
    </location>
</feature>
<feature type="active site" description="Nucleophile" evidence="1">
    <location>
        <position position="146"/>
    </location>
</feature>
<feature type="binding site" description="in other chain" evidence="1">
    <location>
        <position position="21"/>
    </location>
    <ligand>
        <name>dUMP</name>
        <dbReference type="ChEBI" id="CHEBI:246422"/>
        <note>ligand shared between dimeric partners</note>
    </ligand>
</feature>
<feature type="binding site" evidence="1">
    <location>
        <position position="51"/>
    </location>
    <ligand>
        <name>(6R)-5,10-methylene-5,6,7,8-tetrahydrofolate</name>
        <dbReference type="ChEBI" id="CHEBI:15636"/>
    </ligand>
</feature>
<feature type="binding site" evidence="1">
    <location>
        <begin position="126"/>
        <end position="127"/>
    </location>
    <ligand>
        <name>dUMP</name>
        <dbReference type="ChEBI" id="CHEBI:246422"/>
        <note>ligand shared between dimeric partners</note>
    </ligand>
</feature>
<feature type="binding site" description="in other chain" evidence="1">
    <location>
        <begin position="166"/>
        <end position="169"/>
    </location>
    <ligand>
        <name>dUMP</name>
        <dbReference type="ChEBI" id="CHEBI:246422"/>
        <note>ligand shared between dimeric partners</note>
    </ligand>
</feature>
<feature type="binding site" evidence="1">
    <location>
        <position position="169"/>
    </location>
    <ligand>
        <name>(6R)-5,10-methylene-5,6,7,8-tetrahydrofolate</name>
        <dbReference type="ChEBI" id="CHEBI:15636"/>
    </ligand>
</feature>
<feature type="binding site" description="in other chain" evidence="1">
    <location>
        <position position="177"/>
    </location>
    <ligand>
        <name>dUMP</name>
        <dbReference type="ChEBI" id="CHEBI:246422"/>
        <note>ligand shared between dimeric partners</note>
    </ligand>
</feature>
<feature type="binding site" description="in other chain" evidence="1">
    <location>
        <begin position="207"/>
        <end position="209"/>
    </location>
    <ligand>
        <name>dUMP</name>
        <dbReference type="ChEBI" id="CHEBI:246422"/>
        <note>ligand shared between dimeric partners</note>
    </ligand>
</feature>
<feature type="binding site" evidence="1">
    <location>
        <position position="263"/>
    </location>
    <ligand>
        <name>(6R)-5,10-methylene-5,6,7,8-tetrahydrofolate</name>
        <dbReference type="ChEBI" id="CHEBI:15636"/>
    </ligand>
</feature>
<sequence>MKQYHDLMQHILDQGVKKEDRTGTGTVSVFGYQMRFNLQEGFPLLTTKKLHMRSITHELLWFLQGDTNIKYLKDNNVSIWDEWADENGNLGPVYGYQWRSWPTPDGKHIDQITNVVNMIKNNPDSRRLIVSAWNVGEIEKMKLPPCHAFFQFYVADGKLSCQLYQRSADVFLGVPFNIASYALLTMMVAQVCGLQAGDFVHTLGDAHLYSNHLEQAKLQLSRDFRPLPAMKINPDVKSIFDFKFEDFTLEGYDPHPHIKAAVAV</sequence>
<evidence type="ECO:0000255" key="1">
    <source>
        <dbReference type="HAMAP-Rule" id="MF_00008"/>
    </source>
</evidence>
<gene>
    <name evidence="1" type="primary">thyA</name>
    <name type="ordered locus">CHU_1289</name>
</gene>
<reference key="1">
    <citation type="journal article" date="2007" name="Appl. Environ. Microbiol.">
        <title>Genome sequence of the cellulolytic gliding bacterium Cytophaga hutchinsonii.</title>
        <authorList>
            <person name="Xie G."/>
            <person name="Bruce D.C."/>
            <person name="Challacombe J.F."/>
            <person name="Chertkov O."/>
            <person name="Detter J.C."/>
            <person name="Gilna P."/>
            <person name="Han C.S."/>
            <person name="Lucas S."/>
            <person name="Misra M."/>
            <person name="Myers G.L."/>
            <person name="Richardson P."/>
            <person name="Tapia R."/>
            <person name="Thayer N."/>
            <person name="Thompson L.S."/>
            <person name="Brettin T.S."/>
            <person name="Henrissat B."/>
            <person name="Wilson D.B."/>
            <person name="McBride M.J."/>
        </authorList>
    </citation>
    <scope>NUCLEOTIDE SEQUENCE [LARGE SCALE GENOMIC DNA]</scope>
    <source>
        <strain>ATCC 33406 / DSM 1761 / JCM 20678 / CIP 103989 / IAM 12607 / NBRC 15051 / NCIMB 9469 / D465</strain>
    </source>
</reference>
<proteinExistence type="inferred from homology"/>
<comment type="function">
    <text evidence="1">Catalyzes the reductive methylation of 2'-deoxyuridine-5'-monophosphate (dUMP) to 2'-deoxythymidine-5'-monophosphate (dTMP) while utilizing 5,10-methylenetetrahydrofolate (mTHF) as the methyl donor and reductant in the reaction, yielding dihydrofolate (DHF) as a by-product. This enzymatic reaction provides an intracellular de novo source of dTMP, an essential precursor for DNA biosynthesis.</text>
</comment>
<comment type="catalytic activity">
    <reaction evidence="1">
        <text>dUMP + (6R)-5,10-methylene-5,6,7,8-tetrahydrofolate = 7,8-dihydrofolate + dTMP</text>
        <dbReference type="Rhea" id="RHEA:12104"/>
        <dbReference type="ChEBI" id="CHEBI:15636"/>
        <dbReference type="ChEBI" id="CHEBI:57451"/>
        <dbReference type="ChEBI" id="CHEBI:63528"/>
        <dbReference type="ChEBI" id="CHEBI:246422"/>
        <dbReference type="EC" id="2.1.1.45"/>
    </reaction>
</comment>
<comment type="pathway">
    <text evidence="1">Pyrimidine metabolism; dTTP biosynthesis.</text>
</comment>
<comment type="subunit">
    <text evidence="1">Homodimer.</text>
</comment>
<comment type="subcellular location">
    <subcellularLocation>
        <location evidence="1">Cytoplasm</location>
    </subcellularLocation>
</comment>
<comment type="similarity">
    <text evidence="1">Belongs to the thymidylate synthase family. Bacterial-type ThyA subfamily.</text>
</comment>
<protein>
    <recommendedName>
        <fullName evidence="1">Thymidylate synthase</fullName>
        <shortName evidence="1">TS</shortName>
        <shortName evidence="1">TSase</shortName>
        <ecNumber evidence="1">2.1.1.45</ecNumber>
    </recommendedName>
</protein>
<accession>Q11VK5</accession>
<keyword id="KW-0963">Cytoplasm</keyword>
<keyword id="KW-0489">Methyltransferase</keyword>
<keyword id="KW-0545">Nucleotide biosynthesis</keyword>
<keyword id="KW-1185">Reference proteome</keyword>
<keyword id="KW-0808">Transferase</keyword>
<dbReference type="EC" id="2.1.1.45" evidence="1"/>
<dbReference type="EMBL" id="CP000383">
    <property type="protein sequence ID" value="ABG58561.1"/>
    <property type="molecule type" value="Genomic_DNA"/>
</dbReference>
<dbReference type="RefSeq" id="WP_011584676.1">
    <property type="nucleotide sequence ID" value="NC_008255.1"/>
</dbReference>
<dbReference type="SMR" id="Q11VK5"/>
<dbReference type="STRING" id="269798.CHU_1289"/>
<dbReference type="KEGG" id="chu:CHU_1289"/>
<dbReference type="eggNOG" id="COG0207">
    <property type="taxonomic scope" value="Bacteria"/>
</dbReference>
<dbReference type="HOGENOM" id="CLU_021669_0_0_10"/>
<dbReference type="OrthoDB" id="9774633at2"/>
<dbReference type="UniPathway" id="UPA00575"/>
<dbReference type="Proteomes" id="UP000001822">
    <property type="component" value="Chromosome"/>
</dbReference>
<dbReference type="GO" id="GO:0005829">
    <property type="term" value="C:cytosol"/>
    <property type="evidence" value="ECO:0007669"/>
    <property type="project" value="TreeGrafter"/>
</dbReference>
<dbReference type="GO" id="GO:0004799">
    <property type="term" value="F:thymidylate synthase activity"/>
    <property type="evidence" value="ECO:0007669"/>
    <property type="project" value="UniProtKB-UniRule"/>
</dbReference>
<dbReference type="GO" id="GO:0006231">
    <property type="term" value="P:dTMP biosynthetic process"/>
    <property type="evidence" value="ECO:0007669"/>
    <property type="project" value="UniProtKB-UniRule"/>
</dbReference>
<dbReference type="GO" id="GO:0006235">
    <property type="term" value="P:dTTP biosynthetic process"/>
    <property type="evidence" value="ECO:0007669"/>
    <property type="project" value="UniProtKB-UniRule"/>
</dbReference>
<dbReference type="GO" id="GO:0032259">
    <property type="term" value="P:methylation"/>
    <property type="evidence" value="ECO:0007669"/>
    <property type="project" value="UniProtKB-KW"/>
</dbReference>
<dbReference type="CDD" id="cd00351">
    <property type="entry name" value="TS_Pyrimidine_HMase"/>
    <property type="match status" value="1"/>
</dbReference>
<dbReference type="FunFam" id="3.30.572.10:FF:000001">
    <property type="entry name" value="Thymidylate synthase"/>
    <property type="match status" value="1"/>
</dbReference>
<dbReference type="Gene3D" id="3.30.572.10">
    <property type="entry name" value="Thymidylate synthase/dCMP hydroxymethylase domain"/>
    <property type="match status" value="1"/>
</dbReference>
<dbReference type="HAMAP" id="MF_00008">
    <property type="entry name" value="Thymidy_synth_bact"/>
    <property type="match status" value="1"/>
</dbReference>
<dbReference type="InterPro" id="IPR045097">
    <property type="entry name" value="Thymidate_synth/dCMP_Mease"/>
</dbReference>
<dbReference type="InterPro" id="IPR023451">
    <property type="entry name" value="Thymidate_synth/dCMP_Mease_dom"/>
</dbReference>
<dbReference type="InterPro" id="IPR036926">
    <property type="entry name" value="Thymidate_synth/dCMP_Mease_sf"/>
</dbReference>
<dbReference type="InterPro" id="IPR000398">
    <property type="entry name" value="Thymidylate_synthase"/>
</dbReference>
<dbReference type="InterPro" id="IPR020940">
    <property type="entry name" value="Thymidylate_synthase_AS"/>
</dbReference>
<dbReference type="NCBIfam" id="NF002497">
    <property type="entry name" value="PRK01827.1-3"/>
    <property type="match status" value="1"/>
</dbReference>
<dbReference type="NCBIfam" id="NF002499">
    <property type="entry name" value="PRK01827.1-5"/>
    <property type="match status" value="1"/>
</dbReference>
<dbReference type="NCBIfam" id="TIGR03284">
    <property type="entry name" value="thym_sym"/>
    <property type="match status" value="2"/>
</dbReference>
<dbReference type="PANTHER" id="PTHR11548:SF9">
    <property type="entry name" value="THYMIDYLATE SYNTHASE"/>
    <property type="match status" value="1"/>
</dbReference>
<dbReference type="PANTHER" id="PTHR11548">
    <property type="entry name" value="THYMIDYLATE SYNTHASE 1"/>
    <property type="match status" value="1"/>
</dbReference>
<dbReference type="Pfam" id="PF00303">
    <property type="entry name" value="Thymidylat_synt"/>
    <property type="match status" value="1"/>
</dbReference>
<dbReference type="PRINTS" id="PR00108">
    <property type="entry name" value="THYMDSNTHASE"/>
</dbReference>
<dbReference type="SUPFAM" id="SSF55831">
    <property type="entry name" value="Thymidylate synthase/dCMP hydroxymethylase"/>
    <property type="match status" value="1"/>
</dbReference>
<dbReference type="PROSITE" id="PS00091">
    <property type="entry name" value="THYMIDYLATE_SYNTHASE"/>
    <property type="match status" value="1"/>
</dbReference>